<reference key="1">
    <citation type="journal article" date="2002" name="DNA Res.">
        <title>Complete genomic sequence of nitrogen-fixing symbiotic bacterium Bradyrhizobium japonicum USDA110.</title>
        <authorList>
            <person name="Kaneko T."/>
            <person name="Nakamura Y."/>
            <person name="Sato S."/>
            <person name="Minamisawa K."/>
            <person name="Uchiumi T."/>
            <person name="Sasamoto S."/>
            <person name="Watanabe A."/>
            <person name="Idesawa K."/>
            <person name="Iriguchi M."/>
            <person name="Kawashima K."/>
            <person name="Kohara M."/>
            <person name="Matsumoto M."/>
            <person name="Shimpo S."/>
            <person name="Tsuruoka H."/>
            <person name="Wada T."/>
            <person name="Yamada M."/>
            <person name="Tabata S."/>
        </authorList>
    </citation>
    <scope>NUCLEOTIDE SEQUENCE [LARGE SCALE GENOMIC DNA]</scope>
    <source>
        <strain>JCM 10833 / BCRC 13528 / IAM 13628 / NBRC 14792 / USDA 110</strain>
    </source>
</reference>
<dbReference type="EMBL" id="BA000040">
    <property type="protein sequence ID" value="BAC50293.1"/>
    <property type="molecule type" value="Genomic_DNA"/>
</dbReference>
<dbReference type="RefSeq" id="NP_771668.1">
    <property type="nucleotide sequence ID" value="NC_004463.1"/>
</dbReference>
<dbReference type="RefSeq" id="WP_011087789.1">
    <property type="nucleotide sequence ID" value="NC_004463.1"/>
</dbReference>
<dbReference type="SMR" id="Q89K81"/>
<dbReference type="FunCoup" id="Q89K81">
    <property type="interactions" value="423"/>
</dbReference>
<dbReference type="STRING" id="224911.AAV28_22500"/>
<dbReference type="EnsemblBacteria" id="BAC50293">
    <property type="protein sequence ID" value="BAC50293"/>
    <property type="gene ID" value="BAC50293"/>
</dbReference>
<dbReference type="GeneID" id="46492033"/>
<dbReference type="KEGG" id="bja:bll5028"/>
<dbReference type="PATRIC" id="fig|224911.44.peg.4892"/>
<dbReference type="eggNOG" id="COG0781">
    <property type="taxonomic scope" value="Bacteria"/>
</dbReference>
<dbReference type="HOGENOM" id="CLU_087843_4_0_5"/>
<dbReference type="InParanoid" id="Q89K81"/>
<dbReference type="OrthoDB" id="9797817at2"/>
<dbReference type="PhylomeDB" id="Q89K81"/>
<dbReference type="Proteomes" id="UP000002526">
    <property type="component" value="Chromosome"/>
</dbReference>
<dbReference type="GO" id="GO:0005829">
    <property type="term" value="C:cytosol"/>
    <property type="evidence" value="ECO:0000318"/>
    <property type="project" value="GO_Central"/>
</dbReference>
<dbReference type="GO" id="GO:0003723">
    <property type="term" value="F:RNA binding"/>
    <property type="evidence" value="ECO:0007669"/>
    <property type="project" value="UniProtKB-UniRule"/>
</dbReference>
<dbReference type="GO" id="GO:0006353">
    <property type="term" value="P:DNA-templated transcription termination"/>
    <property type="evidence" value="ECO:0007669"/>
    <property type="project" value="UniProtKB-UniRule"/>
</dbReference>
<dbReference type="GO" id="GO:0031564">
    <property type="term" value="P:transcription antitermination"/>
    <property type="evidence" value="ECO:0007669"/>
    <property type="project" value="UniProtKB-KW"/>
</dbReference>
<dbReference type="Gene3D" id="1.10.940.10">
    <property type="entry name" value="NusB-like"/>
    <property type="match status" value="1"/>
</dbReference>
<dbReference type="HAMAP" id="MF_00073">
    <property type="entry name" value="NusB"/>
    <property type="match status" value="1"/>
</dbReference>
<dbReference type="InterPro" id="IPR035926">
    <property type="entry name" value="NusB-like_sf"/>
</dbReference>
<dbReference type="InterPro" id="IPR011605">
    <property type="entry name" value="NusB_fam"/>
</dbReference>
<dbReference type="InterPro" id="IPR006027">
    <property type="entry name" value="NusB_RsmB_TIM44"/>
</dbReference>
<dbReference type="NCBIfam" id="TIGR01951">
    <property type="entry name" value="nusB"/>
    <property type="match status" value="1"/>
</dbReference>
<dbReference type="PANTHER" id="PTHR11078:SF3">
    <property type="entry name" value="ANTITERMINATION NUSB DOMAIN-CONTAINING PROTEIN"/>
    <property type="match status" value="1"/>
</dbReference>
<dbReference type="PANTHER" id="PTHR11078">
    <property type="entry name" value="N UTILIZATION SUBSTANCE PROTEIN B-RELATED"/>
    <property type="match status" value="1"/>
</dbReference>
<dbReference type="Pfam" id="PF01029">
    <property type="entry name" value="NusB"/>
    <property type="match status" value="1"/>
</dbReference>
<dbReference type="SUPFAM" id="SSF48013">
    <property type="entry name" value="NusB-like"/>
    <property type="match status" value="1"/>
</dbReference>
<keyword id="KW-1185">Reference proteome</keyword>
<keyword id="KW-0694">RNA-binding</keyword>
<keyword id="KW-0804">Transcription</keyword>
<keyword id="KW-0889">Transcription antitermination</keyword>
<keyword id="KW-0805">Transcription regulation</keyword>
<gene>
    <name evidence="1" type="primary">nusB</name>
    <name type="ordered locus">bll5028</name>
</gene>
<name>NUSB_BRADU</name>
<comment type="function">
    <text evidence="1">Involved in transcription antitermination. Required for transcription of ribosomal RNA (rRNA) genes. Binds specifically to the boxA antiterminator sequence of the ribosomal RNA (rrn) operons.</text>
</comment>
<comment type="similarity">
    <text evidence="1">Belongs to the NusB family.</text>
</comment>
<evidence type="ECO:0000255" key="1">
    <source>
        <dbReference type="HAMAP-Rule" id="MF_00073"/>
    </source>
</evidence>
<feature type="chain" id="PRO_0000176514" description="Transcription antitermination protein NusB">
    <location>
        <begin position="1"/>
        <end position="165"/>
    </location>
</feature>
<sequence length="165" mass="18230">MADNNKKPAGLTEKKANRRGAARLAAVQALYQMDIAGAGINDIFAEFESHWLGNEVEGDTYLPAEAAFFRDVVSGVVRDQKKLDPLIDEALSKGWPLKRIEAILRAVLRAGAYELQHRKDVPGRVVVSEYVDVANAFVDREETGMVNAVLDQIGRQFRGDEFGRG</sequence>
<organism>
    <name type="scientific">Bradyrhizobium diazoefficiens (strain JCM 10833 / BCRC 13528 / IAM 13628 / NBRC 14792 / USDA 110)</name>
    <dbReference type="NCBI Taxonomy" id="224911"/>
    <lineage>
        <taxon>Bacteria</taxon>
        <taxon>Pseudomonadati</taxon>
        <taxon>Pseudomonadota</taxon>
        <taxon>Alphaproteobacteria</taxon>
        <taxon>Hyphomicrobiales</taxon>
        <taxon>Nitrobacteraceae</taxon>
        <taxon>Bradyrhizobium</taxon>
    </lineage>
</organism>
<accession>Q89K81</accession>
<proteinExistence type="inferred from homology"/>
<protein>
    <recommendedName>
        <fullName evidence="1">Transcription antitermination protein NusB</fullName>
    </recommendedName>
    <alternativeName>
        <fullName evidence="1">Antitermination factor NusB</fullName>
    </alternativeName>
</protein>